<comment type="function">
    <text evidence="1">Catalyzes the reversible oxidation of malate to oxaloacetate.</text>
</comment>
<comment type="catalytic activity">
    <reaction evidence="1">
        <text>(S)-malate + NAD(+) = oxaloacetate + NADH + H(+)</text>
        <dbReference type="Rhea" id="RHEA:21432"/>
        <dbReference type="ChEBI" id="CHEBI:15378"/>
        <dbReference type="ChEBI" id="CHEBI:15589"/>
        <dbReference type="ChEBI" id="CHEBI:16452"/>
        <dbReference type="ChEBI" id="CHEBI:57540"/>
        <dbReference type="ChEBI" id="CHEBI:57945"/>
        <dbReference type="EC" id="1.1.1.37"/>
    </reaction>
</comment>
<comment type="similarity">
    <text evidence="1">Belongs to the LDH/MDH superfamily. MDH type 2 family.</text>
</comment>
<evidence type="ECO:0000255" key="1">
    <source>
        <dbReference type="HAMAP-Rule" id="MF_01517"/>
    </source>
</evidence>
<gene>
    <name evidence="1" type="primary">mdh</name>
    <name type="ordered locus">BMA10247_A0497</name>
</gene>
<dbReference type="EC" id="1.1.1.37" evidence="1"/>
<dbReference type="EMBL" id="CP000547">
    <property type="protein sequence ID" value="ABO02347.1"/>
    <property type="molecule type" value="Genomic_DNA"/>
</dbReference>
<dbReference type="RefSeq" id="WP_004187735.1">
    <property type="nucleotide sequence ID" value="NZ_CP007801.1"/>
</dbReference>
<dbReference type="SMR" id="A3MBR2"/>
<dbReference type="KEGG" id="bmaz:BM44_3263"/>
<dbReference type="KEGG" id="bmn:BMA10247_A0497"/>
<dbReference type="PATRIC" id="fig|320389.8.peg.3662"/>
<dbReference type="GO" id="GO:0030060">
    <property type="term" value="F:L-malate dehydrogenase (NAD+) activity"/>
    <property type="evidence" value="ECO:0007669"/>
    <property type="project" value="UniProtKB-UniRule"/>
</dbReference>
<dbReference type="GO" id="GO:0006108">
    <property type="term" value="P:malate metabolic process"/>
    <property type="evidence" value="ECO:0007669"/>
    <property type="project" value="InterPro"/>
</dbReference>
<dbReference type="GO" id="GO:0006099">
    <property type="term" value="P:tricarboxylic acid cycle"/>
    <property type="evidence" value="ECO:0007669"/>
    <property type="project" value="UniProtKB-UniRule"/>
</dbReference>
<dbReference type="CDD" id="cd01338">
    <property type="entry name" value="MDH_chloroplast-like"/>
    <property type="match status" value="1"/>
</dbReference>
<dbReference type="FunFam" id="3.40.50.720:FF:000010">
    <property type="entry name" value="Malate dehydrogenase"/>
    <property type="match status" value="1"/>
</dbReference>
<dbReference type="FunFam" id="3.90.110.10:FF:000002">
    <property type="entry name" value="Malate dehydrogenase"/>
    <property type="match status" value="1"/>
</dbReference>
<dbReference type="Gene3D" id="3.90.110.10">
    <property type="entry name" value="Lactate dehydrogenase/glycoside hydrolase, family 4, C-terminal"/>
    <property type="match status" value="1"/>
</dbReference>
<dbReference type="Gene3D" id="3.40.50.720">
    <property type="entry name" value="NAD(P)-binding Rossmann-like Domain"/>
    <property type="match status" value="1"/>
</dbReference>
<dbReference type="HAMAP" id="MF_01517">
    <property type="entry name" value="Malate_dehydrog_2"/>
    <property type="match status" value="1"/>
</dbReference>
<dbReference type="InterPro" id="IPR001557">
    <property type="entry name" value="L-lactate/malate_DH"/>
</dbReference>
<dbReference type="InterPro" id="IPR022383">
    <property type="entry name" value="Lactate/malate_DH_C"/>
</dbReference>
<dbReference type="InterPro" id="IPR001236">
    <property type="entry name" value="Lactate/malate_DH_N"/>
</dbReference>
<dbReference type="InterPro" id="IPR015955">
    <property type="entry name" value="Lactate_DH/Glyco_Ohase_4_C"/>
</dbReference>
<dbReference type="InterPro" id="IPR010945">
    <property type="entry name" value="Malate_DH_type2"/>
</dbReference>
<dbReference type="InterPro" id="IPR036291">
    <property type="entry name" value="NAD(P)-bd_dom_sf"/>
</dbReference>
<dbReference type="NCBIfam" id="TIGR01759">
    <property type="entry name" value="MalateDH-SF1"/>
    <property type="match status" value="1"/>
</dbReference>
<dbReference type="NCBIfam" id="NF003916">
    <property type="entry name" value="PRK05442.1"/>
    <property type="match status" value="1"/>
</dbReference>
<dbReference type="PANTHER" id="PTHR23382">
    <property type="entry name" value="MALATE DEHYDROGENASE"/>
    <property type="match status" value="1"/>
</dbReference>
<dbReference type="Pfam" id="PF02866">
    <property type="entry name" value="Ldh_1_C"/>
    <property type="match status" value="1"/>
</dbReference>
<dbReference type="Pfam" id="PF00056">
    <property type="entry name" value="Ldh_1_N"/>
    <property type="match status" value="1"/>
</dbReference>
<dbReference type="PIRSF" id="PIRSF000102">
    <property type="entry name" value="Lac_mal_DH"/>
    <property type="match status" value="1"/>
</dbReference>
<dbReference type="SUPFAM" id="SSF56327">
    <property type="entry name" value="LDH C-terminal domain-like"/>
    <property type="match status" value="1"/>
</dbReference>
<dbReference type="SUPFAM" id="SSF51735">
    <property type="entry name" value="NAD(P)-binding Rossmann-fold domains"/>
    <property type="match status" value="1"/>
</dbReference>
<protein>
    <recommendedName>
        <fullName evidence="1">Malate dehydrogenase</fullName>
        <ecNumber evidence="1">1.1.1.37</ecNumber>
    </recommendedName>
</protein>
<name>MDH_BURM7</name>
<accession>A3MBR2</accession>
<proteinExistence type="inferred from homology"/>
<reference key="1">
    <citation type="journal article" date="2010" name="Genome Biol. Evol.">
        <title>Continuing evolution of Burkholderia mallei through genome reduction and large-scale rearrangements.</title>
        <authorList>
            <person name="Losada L."/>
            <person name="Ronning C.M."/>
            <person name="DeShazer D."/>
            <person name="Woods D."/>
            <person name="Fedorova N."/>
            <person name="Kim H.S."/>
            <person name="Shabalina S.A."/>
            <person name="Pearson T.R."/>
            <person name="Brinkac L."/>
            <person name="Tan P."/>
            <person name="Nandi T."/>
            <person name="Crabtree J."/>
            <person name="Badger J."/>
            <person name="Beckstrom-Sternberg S."/>
            <person name="Saqib M."/>
            <person name="Schutzer S.E."/>
            <person name="Keim P."/>
            <person name="Nierman W.C."/>
        </authorList>
    </citation>
    <scope>NUCLEOTIDE SEQUENCE [LARGE SCALE GENOMIC DNA]</scope>
    <source>
        <strain>NCTC 10247</strain>
    </source>
</reference>
<keyword id="KW-0520">NAD</keyword>
<keyword id="KW-0560">Oxidoreductase</keyword>
<keyword id="KW-0816">Tricarboxylic acid cycle</keyword>
<feature type="chain" id="PRO_1000068599" description="Malate dehydrogenase">
    <location>
        <begin position="1"/>
        <end position="327"/>
    </location>
</feature>
<feature type="active site" description="Proton acceptor" evidence="1">
    <location>
        <position position="188"/>
    </location>
</feature>
<feature type="binding site" evidence="1">
    <location>
        <begin position="12"/>
        <end position="18"/>
    </location>
    <ligand>
        <name>NAD(+)</name>
        <dbReference type="ChEBI" id="CHEBI:57540"/>
    </ligand>
</feature>
<feature type="binding site" evidence="1">
    <location>
        <position position="93"/>
    </location>
    <ligand>
        <name>substrate</name>
    </ligand>
</feature>
<feature type="binding site" evidence="1">
    <location>
        <position position="99"/>
    </location>
    <ligand>
        <name>substrate</name>
    </ligand>
</feature>
<feature type="binding site" evidence="1">
    <location>
        <position position="106"/>
    </location>
    <ligand>
        <name>NAD(+)</name>
        <dbReference type="ChEBI" id="CHEBI:57540"/>
    </ligand>
</feature>
<feature type="binding site" evidence="1">
    <location>
        <position position="113"/>
    </location>
    <ligand>
        <name>NAD(+)</name>
        <dbReference type="ChEBI" id="CHEBI:57540"/>
    </ligand>
</feature>
<feature type="binding site" evidence="1">
    <location>
        <begin position="130"/>
        <end position="132"/>
    </location>
    <ligand>
        <name>NAD(+)</name>
        <dbReference type="ChEBI" id="CHEBI:57540"/>
    </ligand>
</feature>
<feature type="binding site" evidence="1">
    <location>
        <position position="132"/>
    </location>
    <ligand>
        <name>substrate</name>
    </ligand>
</feature>
<feature type="binding site" evidence="1">
    <location>
        <position position="163"/>
    </location>
    <ligand>
        <name>substrate</name>
    </ligand>
</feature>
<organism>
    <name type="scientific">Burkholderia mallei (strain NCTC 10247)</name>
    <dbReference type="NCBI Taxonomy" id="320389"/>
    <lineage>
        <taxon>Bacteria</taxon>
        <taxon>Pseudomonadati</taxon>
        <taxon>Pseudomonadota</taxon>
        <taxon>Betaproteobacteria</taxon>
        <taxon>Burkholderiales</taxon>
        <taxon>Burkholderiaceae</taxon>
        <taxon>Burkholderia</taxon>
        <taxon>pseudomallei group</taxon>
    </lineage>
</organism>
<sequence>MAKPAKRVAVTGAAGQIAYSLLFRIANGDLLGKDQPVILQLLDLPQAQAAVKGVVMELDDCAFPLLAGVVITDDPKVAFKDADVALLVGARPRSKGMERKDLLSANAEIFTVQGAALNEVASRDVKVLVVGNPANTNAYIAMKSAPDLPKKNFTAMLRLDHNRALSQLAAKSGKPVASIEKLAVWGNHSPTMYPDFRFATAEGESLLKLINDDVWNRDTFIPTVGKRGAAIIEARGLSSAASAANAAIDHVRDWVLGTNGKWVTMGIPSDGSYGIPEDIIYGVPVICENGEYKRVEGLEIDAFSREKMDGTLAELLEERDGVAHLLK</sequence>